<dbReference type="EMBL" id="BC083705">
    <property type="protein sequence ID" value="AAH83705.1"/>
    <property type="molecule type" value="mRNA"/>
</dbReference>
<dbReference type="EMBL" id="U75391">
    <property type="protein sequence ID" value="AAB18746.1"/>
    <property type="molecule type" value="mRNA"/>
</dbReference>
<dbReference type="EMBL" id="U75392">
    <property type="protein sequence ID" value="AAB18747.1"/>
    <property type="molecule type" value="mRNA"/>
</dbReference>
<dbReference type="RefSeq" id="NP_001013053.1">
    <property type="nucleotide sequence ID" value="NM_001013035.1"/>
</dbReference>
<dbReference type="SMR" id="Q5XIH7"/>
<dbReference type="BioGRID" id="250411">
    <property type="interactions" value="9"/>
</dbReference>
<dbReference type="FunCoup" id="Q5XIH7">
    <property type="interactions" value="3012"/>
</dbReference>
<dbReference type="IntAct" id="Q5XIH7">
    <property type="interactions" value="7"/>
</dbReference>
<dbReference type="MINT" id="Q5XIH7"/>
<dbReference type="STRING" id="10116.ENSRNOP00000017472"/>
<dbReference type="CarbonylDB" id="Q5XIH7"/>
<dbReference type="GlyGen" id="Q5XIH7">
    <property type="glycosylation" value="4 sites, 1 O-linked glycan (4 sites)"/>
</dbReference>
<dbReference type="iPTMnet" id="Q5XIH7"/>
<dbReference type="PhosphoSitePlus" id="Q5XIH7"/>
<dbReference type="jPOST" id="Q5XIH7"/>
<dbReference type="PaxDb" id="10116-ENSRNOP00000017472"/>
<dbReference type="Ensembl" id="ENSRNOT00000091464.2">
    <property type="protein sequence ID" value="ENSRNOP00000075668.2"/>
    <property type="gene ID" value="ENSRNOG00000012999.8"/>
</dbReference>
<dbReference type="GeneID" id="114766"/>
<dbReference type="KEGG" id="rno:114766"/>
<dbReference type="UCSC" id="RGD:620203">
    <property type="organism name" value="rat"/>
</dbReference>
<dbReference type="AGR" id="RGD:620203"/>
<dbReference type="CTD" id="11331"/>
<dbReference type="RGD" id="620203">
    <property type="gene designation" value="Phb2"/>
</dbReference>
<dbReference type="eggNOG" id="KOG3090">
    <property type="taxonomic scope" value="Eukaryota"/>
</dbReference>
<dbReference type="GeneTree" id="ENSGT00950000183070"/>
<dbReference type="InParanoid" id="Q5XIH7"/>
<dbReference type="OMA" id="NEGTHFQ"/>
<dbReference type="OrthoDB" id="275637at2759"/>
<dbReference type="PhylomeDB" id="Q5XIH7"/>
<dbReference type="TreeFam" id="TF354230"/>
<dbReference type="Reactome" id="R-RNO-8949664">
    <property type="pathway name" value="Processing of SMDT1"/>
</dbReference>
<dbReference type="Reactome" id="R-RNO-9840373">
    <property type="pathway name" value="Cellular response to mitochondrial stress"/>
</dbReference>
<dbReference type="PRO" id="PR:Q5XIH7"/>
<dbReference type="Proteomes" id="UP000002494">
    <property type="component" value="Chromosome 4"/>
</dbReference>
<dbReference type="Bgee" id="ENSRNOG00000012999">
    <property type="expression patterns" value="Expressed in heart and 18 other cell types or tissues"/>
</dbReference>
<dbReference type="ExpressionAtlas" id="Q5XIH7">
    <property type="expression patterns" value="baseline and differential"/>
</dbReference>
<dbReference type="GO" id="GO:0030424">
    <property type="term" value="C:axon"/>
    <property type="evidence" value="ECO:0000314"/>
    <property type="project" value="RGD"/>
</dbReference>
<dbReference type="GO" id="GO:0071944">
    <property type="term" value="C:cell periphery"/>
    <property type="evidence" value="ECO:0000266"/>
    <property type="project" value="RGD"/>
</dbReference>
<dbReference type="GO" id="GO:0009986">
    <property type="term" value="C:cell surface"/>
    <property type="evidence" value="ECO:0000250"/>
    <property type="project" value="UniProtKB"/>
</dbReference>
<dbReference type="GO" id="GO:0005737">
    <property type="term" value="C:cytoplasm"/>
    <property type="evidence" value="ECO:0000266"/>
    <property type="project" value="RGD"/>
</dbReference>
<dbReference type="GO" id="GO:0098982">
    <property type="term" value="C:GABA-ergic synapse"/>
    <property type="evidence" value="ECO:0000314"/>
    <property type="project" value="SynGO"/>
</dbReference>
<dbReference type="GO" id="GO:0098978">
    <property type="term" value="C:glutamatergic synapse"/>
    <property type="evidence" value="ECO:0000314"/>
    <property type="project" value="SynGO"/>
</dbReference>
<dbReference type="GO" id="GO:0098800">
    <property type="term" value="C:inner mitochondrial membrane protein complex"/>
    <property type="evidence" value="ECO:0000250"/>
    <property type="project" value="UniProtKB"/>
</dbReference>
<dbReference type="GO" id="GO:0005743">
    <property type="term" value="C:mitochondrial inner membrane"/>
    <property type="evidence" value="ECO:0000250"/>
    <property type="project" value="UniProtKB"/>
</dbReference>
<dbReference type="GO" id="GO:0005741">
    <property type="term" value="C:mitochondrial outer membrane"/>
    <property type="evidence" value="ECO:0000266"/>
    <property type="project" value="RGD"/>
</dbReference>
<dbReference type="GO" id="GO:0035632">
    <property type="term" value="C:mitochondrial prohibitin complex"/>
    <property type="evidence" value="ECO:0000250"/>
    <property type="project" value="UniProtKB"/>
</dbReference>
<dbReference type="GO" id="GO:0005739">
    <property type="term" value="C:mitochondrion"/>
    <property type="evidence" value="ECO:0000314"/>
    <property type="project" value="UniProtKB"/>
</dbReference>
<dbReference type="GO" id="GO:0016363">
    <property type="term" value="C:nuclear matrix"/>
    <property type="evidence" value="ECO:0000250"/>
    <property type="project" value="UniProtKB"/>
</dbReference>
<dbReference type="GO" id="GO:0005634">
    <property type="term" value="C:nucleus"/>
    <property type="evidence" value="ECO:0000250"/>
    <property type="project" value="UniProtKB"/>
</dbReference>
<dbReference type="GO" id="GO:0005886">
    <property type="term" value="C:plasma membrane"/>
    <property type="evidence" value="ECO:0000250"/>
    <property type="project" value="UniProtKB"/>
</dbReference>
<dbReference type="GO" id="GO:0014069">
    <property type="term" value="C:postsynaptic density"/>
    <property type="evidence" value="ECO:0000314"/>
    <property type="project" value="SynGO"/>
</dbReference>
<dbReference type="GO" id="GO:0048786">
    <property type="term" value="C:presynaptic active zone"/>
    <property type="evidence" value="ECO:0000314"/>
    <property type="project" value="SynGO"/>
</dbReference>
<dbReference type="GO" id="GO:0032991">
    <property type="term" value="C:protein-containing complex"/>
    <property type="evidence" value="ECO:0000250"/>
    <property type="project" value="UniProtKB"/>
</dbReference>
<dbReference type="GO" id="GO:0033218">
    <property type="term" value="F:amide binding"/>
    <property type="evidence" value="ECO:0000266"/>
    <property type="project" value="RGD"/>
</dbReference>
<dbReference type="GO" id="GO:0042802">
    <property type="term" value="F:identical protein binding"/>
    <property type="evidence" value="ECO:0000266"/>
    <property type="project" value="RGD"/>
</dbReference>
<dbReference type="GO" id="GO:0046982">
    <property type="term" value="F:protein heterodimerization activity"/>
    <property type="evidence" value="ECO:0000266"/>
    <property type="project" value="RGD"/>
</dbReference>
<dbReference type="GO" id="GO:0042803">
    <property type="term" value="F:protein homodimerization activity"/>
    <property type="evidence" value="ECO:0000250"/>
    <property type="project" value="UniProtKB"/>
</dbReference>
<dbReference type="GO" id="GO:0046625">
    <property type="term" value="F:sphingolipid binding"/>
    <property type="evidence" value="ECO:0000250"/>
    <property type="project" value="UniProtKB"/>
</dbReference>
<dbReference type="GO" id="GO:0140374">
    <property type="term" value="P:antiviral innate immune response"/>
    <property type="evidence" value="ECO:0000266"/>
    <property type="project" value="RGD"/>
</dbReference>
<dbReference type="GO" id="GO:0042113">
    <property type="term" value="P:B cell activation"/>
    <property type="evidence" value="ECO:0000250"/>
    <property type="project" value="UniProtKB"/>
</dbReference>
<dbReference type="GO" id="GO:0016477">
    <property type="term" value="P:cell migration"/>
    <property type="evidence" value="ECO:0000250"/>
    <property type="project" value="UniProtKB"/>
</dbReference>
<dbReference type="GO" id="GO:0071456">
    <property type="term" value="P:cellular response to hypoxia"/>
    <property type="evidence" value="ECO:0000270"/>
    <property type="project" value="RGD"/>
</dbReference>
<dbReference type="GO" id="GO:0071300">
    <property type="term" value="P:cellular response to retinoic acid"/>
    <property type="evidence" value="ECO:0000270"/>
    <property type="project" value="RGD"/>
</dbReference>
<dbReference type="GO" id="GO:0030520">
    <property type="term" value="P:estrogen receptor signaling pathway"/>
    <property type="evidence" value="ECO:0000266"/>
    <property type="project" value="RGD"/>
</dbReference>
<dbReference type="GO" id="GO:0060749">
    <property type="term" value="P:mammary gland alveolus development"/>
    <property type="evidence" value="ECO:0000266"/>
    <property type="project" value="RGD"/>
</dbReference>
<dbReference type="GO" id="GO:0060744">
    <property type="term" value="P:mammary gland branching involved in thelarche"/>
    <property type="evidence" value="ECO:0000266"/>
    <property type="project" value="RGD"/>
</dbReference>
<dbReference type="GO" id="GO:0033598">
    <property type="term" value="P:mammary gland epithelial cell proliferation"/>
    <property type="evidence" value="ECO:0000266"/>
    <property type="project" value="RGD"/>
</dbReference>
<dbReference type="GO" id="GO:0007005">
    <property type="term" value="P:mitochondrion organization"/>
    <property type="evidence" value="ECO:0000266"/>
    <property type="project" value="RGD"/>
</dbReference>
<dbReference type="GO" id="GO:0000423">
    <property type="term" value="P:mitophagy"/>
    <property type="evidence" value="ECO:0000250"/>
    <property type="project" value="UniProtKB"/>
</dbReference>
<dbReference type="GO" id="GO:0043066">
    <property type="term" value="P:negative regulation of apoptotic process"/>
    <property type="evidence" value="ECO:0000315"/>
    <property type="project" value="RGD"/>
</dbReference>
<dbReference type="GO" id="GO:0045892">
    <property type="term" value="P:negative regulation of DNA-templated transcription"/>
    <property type="evidence" value="ECO:0000250"/>
    <property type="project" value="UniProtKB"/>
</dbReference>
<dbReference type="GO" id="GO:0033147">
    <property type="term" value="P:negative regulation of intracellular estrogen receptor signaling pathway"/>
    <property type="evidence" value="ECO:0000266"/>
    <property type="project" value="RGD"/>
</dbReference>
<dbReference type="GO" id="GO:0033600">
    <property type="term" value="P:negative regulation of mammary gland epithelial cell proliferation"/>
    <property type="evidence" value="ECO:0000266"/>
    <property type="project" value="RGD"/>
</dbReference>
<dbReference type="GO" id="GO:1902808">
    <property type="term" value="P:positive regulation of cell cycle G1/S phase transition"/>
    <property type="evidence" value="ECO:0000266"/>
    <property type="project" value="RGD"/>
</dbReference>
<dbReference type="GO" id="GO:0070374">
    <property type="term" value="P:positive regulation of ERK1 and ERK2 cascade"/>
    <property type="evidence" value="ECO:0000266"/>
    <property type="project" value="RGD"/>
</dbReference>
<dbReference type="GO" id="GO:0031536">
    <property type="term" value="P:positive regulation of exit from mitosis"/>
    <property type="evidence" value="ECO:0000266"/>
    <property type="project" value="RGD"/>
</dbReference>
<dbReference type="GO" id="GO:0002639">
    <property type="term" value="P:positive regulation of immunoglobulin production"/>
    <property type="evidence" value="ECO:0000250"/>
    <property type="project" value="UniProtKB"/>
</dbReference>
<dbReference type="GO" id="GO:1901224">
    <property type="term" value="P:positive regulation of non-canonical NF-kappaB signal transduction"/>
    <property type="evidence" value="ECO:0000250"/>
    <property type="project" value="UniProtKB"/>
</dbReference>
<dbReference type="GO" id="GO:0006606">
    <property type="term" value="P:protein import into nucleus"/>
    <property type="evidence" value="ECO:0000266"/>
    <property type="project" value="RGD"/>
</dbReference>
<dbReference type="GO" id="GO:0050821">
    <property type="term" value="P:protein stabilization"/>
    <property type="evidence" value="ECO:0000266"/>
    <property type="project" value="RGD"/>
</dbReference>
<dbReference type="GO" id="GO:0060762">
    <property type="term" value="P:regulation of branching involved in mammary gland duct morphogenesis"/>
    <property type="evidence" value="ECO:0000266"/>
    <property type="project" value="RGD"/>
</dbReference>
<dbReference type="GO" id="GO:1900208">
    <property type="term" value="P:regulation of cardiolipin metabolic process"/>
    <property type="evidence" value="ECO:0000250"/>
    <property type="project" value="UniProtKB"/>
</dbReference>
<dbReference type="GO" id="GO:1904959">
    <property type="term" value="P:regulation of cytochrome-c oxidase activity"/>
    <property type="evidence" value="ECO:0000250"/>
    <property type="project" value="UniProtKB"/>
</dbReference>
<dbReference type="GO" id="GO:0039529">
    <property type="term" value="P:RIG-I signaling pathway"/>
    <property type="evidence" value="ECO:0000266"/>
    <property type="project" value="RGD"/>
</dbReference>
<dbReference type="GO" id="GO:0007062">
    <property type="term" value="P:sister chromatid cohesion"/>
    <property type="evidence" value="ECO:0000266"/>
    <property type="project" value="RGD"/>
</dbReference>
<dbReference type="CDD" id="cd03401">
    <property type="entry name" value="SPFH_prohibitin"/>
    <property type="match status" value="1"/>
</dbReference>
<dbReference type="FunFam" id="3.30.479.30:FF:000001">
    <property type="entry name" value="Prohibitin 2"/>
    <property type="match status" value="1"/>
</dbReference>
<dbReference type="Gene3D" id="3.30.479.30">
    <property type="entry name" value="Band 7 domain"/>
    <property type="match status" value="1"/>
</dbReference>
<dbReference type="InterPro" id="IPR001107">
    <property type="entry name" value="Band_7"/>
</dbReference>
<dbReference type="InterPro" id="IPR036013">
    <property type="entry name" value="Band_7/SPFH_dom_sf"/>
</dbReference>
<dbReference type="InterPro" id="IPR000163">
    <property type="entry name" value="Prohibitin"/>
</dbReference>
<dbReference type="PANTHER" id="PTHR23222">
    <property type="entry name" value="PROHIBITIN"/>
    <property type="match status" value="1"/>
</dbReference>
<dbReference type="PANTHER" id="PTHR23222:SF1">
    <property type="entry name" value="PROHIBITIN-2"/>
    <property type="match status" value="1"/>
</dbReference>
<dbReference type="Pfam" id="PF01145">
    <property type="entry name" value="Band_7"/>
    <property type="match status" value="1"/>
</dbReference>
<dbReference type="PRINTS" id="PR00679">
    <property type="entry name" value="PROHIBITIN"/>
</dbReference>
<dbReference type="SMART" id="SM00244">
    <property type="entry name" value="PHB"/>
    <property type="match status" value="1"/>
</dbReference>
<dbReference type="SUPFAM" id="SSF117892">
    <property type="entry name" value="Band 7/SPFH domain"/>
    <property type="match status" value="1"/>
</dbReference>
<name>PHB2_RAT</name>
<gene>
    <name evidence="8" type="primary">Phb2</name>
    <name evidence="7" type="synonym">Bcap37</name>
</gene>
<accession>Q5XIH7</accession>
<accession>P70629</accession>
<accession>P70630</accession>
<evidence type="ECO:0000250" key="1">
    <source>
        <dbReference type="UniProtKB" id="O35129"/>
    </source>
</evidence>
<evidence type="ECO:0000250" key="2">
    <source>
        <dbReference type="UniProtKB" id="Q99623"/>
    </source>
</evidence>
<evidence type="ECO:0000255" key="3"/>
<evidence type="ECO:0000269" key="4">
    <source>
    </source>
</evidence>
<evidence type="ECO:0000305" key="5"/>
<evidence type="ECO:0000312" key="6">
    <source>
        <dbReference type="EMBL" id="AAB18746.1"/>
    </source>
</evidence>
<evidence type="ECO:0000312" key="7">
    <source>
        <dbReference type="EMBL" id="AAH83705.1"/>
    </source>
</evidence>
<evidence type="ECO:0000312" key="8">
    <source>
        <dbReference type="RGD" id="620203"/>
    </source>
</evidence>
<evidence type="ECO:0007744" key="9">
    <source>
    </source>
</evidence>
<reference key="1">
    <citation type="journal article" date="2004" name="Genome Res.">
        <title>The status, quality, and expansion of the NIH full-length cDNA project: the Mammalian Gene Collection (MGC).</title>
        <authorList>
            <consortium name="The MGC Project Team"/>
        </authorList>
    </citation>
    <scope>NUCLEOTIDE SEQUENCE [LARGE SCALE MRNA]</scope>
    <source>
        <tissue>Heart</tissue>
    </source>
</reference>
<reference evidence="5 6" key="2">
    <citation type="journal article" date="1999" name="Arterioscler. Thromb. Vasc. Biol.">
        <title>A systematic analysis of 40 random genes in cultured vascular smooth muscle subtypes reveals a heterogeneity of gene expression and identifies the tight junction gene zonula occludens 2 as a marker of epithelioid 'pup' smooth muscle cells and a participant in carotid neointimal formation.</title>
        <authorList>
            <person name="Adams L.D."/>
            <person name="Lemire J.M."/>
            <person name="Schwartz S.M."/>
        </authorList>
    </citation>
    <scope>NUCLEOTIDE SEQUENCE [LARGE SCALE MRNA] OF 1-110 AND 274-299</scope>
    <source>
        <strain evidence="6">Wistar Kyoto</strain>
        <tissue evidence="6">Aortic smooth muscle</tissue>
    </source>
</reference>
<reference evidence="7" key="3">
    <citation type="submission" date="2007-07" db="UniProtKB">
        <authorList>
            <person name="Lubec G."/>
            <person name="Kang S.U."/>
        </authorList>
    </citation>
    <scope>PROTEIN SEQUENCE OF 148-157</scope>
    <scope>IDENTIFICATION BY MASS SPECTROMETRY</scope>
    <source>
        <strain>Sprague-Dawley</strain>
        <tissue>Brain</tissue>
    </source>
</reference>
<reference evidence="5" key="4">
    <citation type="journal article" date="2001" name="Exp. Cell Res.">
        <title>Mammalian prohibitin proteins respond to mitochondrial stress and decrease during cellular senescence.</title>
        <authorList>
            <person name="Coates P.J."/>
            <person name="Nenutil R."/>
            <person name="McGregor A."/>
            <person name="Picksley S.M."/>
            <person name="Crouch D.H."/>
            <person name="Hall P.A."/>
            <person name="Wright E.G."/>
        </authorList>
    </citation>
    <scope>INTERACTION WITH PHB</scope>
    <scope>SUBCELLULAR LOCATION</scope>
</reference>
<reference key="5">
    <citation type="journal article" date="2012" name="Nat. Commun.">
        <title>Quantitative maps of protein phosphorylation sites across 14 different rat organs and tissues.</title>
        <authorList>
            <person name="Lundby A."/>
            <person name="Secher A."/>
            <person name="Lage K."/>
            <person name="Nordsborg N.B."/>
            <person name="Dmytriyev A."/>
            <person name="Lundby C."/>
            <person name="Olsen J.V."/>
        </authorList>
    </citation>
    <scope>PHOSPHORYLATION [LARGE SCALE ANALYSIS] AT SER-151</scope>
    <scope>IDENTIFICATION BY MASS SPECTROMETRY [LARGE SCALE ANALYSIS]</scope>
</reference>
<proteinExistence type="evidence at protein level"/>
<organism>
    <name type="scientific">Rattus norvegicus</name>
    <name type="common">Rat</name>
    <dbReference type="NCBI Taxonomy" id="10116"/>
    <lineage>
        <taxon>Eukaryota</taxon>
        <taxon>Metazoa</taxon>
        <taxon>Chordata</taxon>
        <taxon>Craniata</taxon>
        <taxon>Vertebrata</taxon>
        <taxon>Euteleostomi</taxon>
        <taxon>Mammalia</taxon>
        <taxon>Eutheria</taxon>
        <taxon>Euarchontoglires</taxon>
        <taxon>Glires</taxon>
        <taxon>Rodentia</taxon>
        <taxon>Myomorpha</taxon>
        <taxon>Muroidea</taxon>
        <taxon>Muridae</taxon>
        <taxon>Murinae</taxon>
        <taxon>Rattus</taxon>
    </lineage>
</organism>
<protein>
    <recommendedName>
        <fullName evidence="5">Prohibitin-2</fullName>
    </recommendedName>
    <alternativeName>
        <fullName>B-cell receptor-associated protein BAP37</fullName>
        <shortName>BAP-37</shortName>
    </alternativeName>
</protein>
<comment type="function">
    <text evidence="1">Protein with pleiotropic attributes mediated in a cell-compartment- and tissue-specific manner, which include the plasma membrane-associated cell signaling functions, mitochondrial chaperone, and transcriptional co-regulator of transcription factors and sex steroid hormones in the nucleus.</text>
</comment>
<comment type="function">
    <text evidence="1">In the mitochondria, together with PHB, forms large ring complexes (prohibitin complexes) in the inner mitochondrial membrane (IMM) and functions as a chaperone protein that stabilizes mitochondrial respiratory enzymes and maintains mitochondrial integrity in the IMM, which is required for mitochondrial morphogenesis, neuronal survival, and normal lifespan. The prohibitin complex, with DNAJC19, regulates cardiolipin remodeling and the protein turnover of OMA1 in a cardiolipin-binding manner. Also regulates cytochrome-c oxidase assembly (COX) and mitochondrial respiration. Binding to sphingoid 1-phosphate (SPP) modulates its regulator activity. Has a key role of mitophagy receptor involved in targeting mitochondria for autophagic degradation. Involved in mitochondrial-mediated antiviral innate immunity, activates RIG-I-mediated signal transduction and production of IFNB1 and pro-inflammatory cytokine IL6.</text>
</comment>
<comment type="function">
    <text evidence="1">In the nucleus, serves as transcriptional co-regulator. Acts as a mediator of transcriptional repression by nuclear hormone receptors via recruitment of histone deacetylases. Functions as an estrogen receptor (ER)-selective coregulator that potentiates the inhibitory activities of antiestrogens and represses the activity of estrogens. Competes with NCOA1 for modulation of ER transcriptional activity.</text>
</comment>
<comment type="function">
    <text evidence="1 2">In the plasma membrane, is involved in IGFBP6-induced cell migration (By similarity). Cooperates with CD86 to mediate CD86-signaling in B lymphocytes that regulates the level of IgG1 produced through the activation of distal signaling intermediates. Upon CD40 engagement, required to activate NF-kappa-B signaling pathway via phospholipase C and protein kinase C activation (By similarity).</text>
</comment>
<comment type="subunit">
    <text evidence="1 2 4">The mitochondrial prohibitin complex consists of two subunits (PHB1 and PHB2), assembled into a membrane-associated ring-shaped supercomplex of approximately 1 mDa (PubMed:11302691). Interacts with ESR1, HDAC1 and HDAC5 (By similarity). Interacts with ZNF703. Interacts with STOML2. Interacts with ARFGEF3 (By similarity). Interacts with SPHK2. Interacts with COX4I1; the interaction associates PHB2 with COX (By similarity). Interacts with MAP1LC3B (membrane-bound form LC3-II); the interaction is direct and upon mitochondrial depolarization and proteasome-dependent outer membrane rupture. Interacts with IGFBP6 (via C-terminal domain). Interacts with CLPB (By similarity). Interacts with CD86 (via cytoplasmic domain); the interactions increases after priming with CD40. Interacts with AFG3L2. Interacts with DNAJC19 (By similarity). Interacts with AKT2; this interaction may be important for myogenic differentiation (By similarity).</text>
</comment>
<comment type="subcellular location">
    <subcellularLocation>
        <location evidence="4">Mitochondrion inner membrane</location>
    </subcellularLocation>
    <subcellularLocation>
        <location evidence="4">Cytoplasm</location>
    </subcellularLocation>
    <subcellularLocation>
        <location evidence="4">Nucleus</location>
    </subcellularLocation>
    <subcellularLocation>
        <location evidence="2">Cell membrane</location>
    </subcellularLocation>
</comment>
<comment type="domain">
    <text evidence="2">LC3-interaction region (LIR) is required for interaction with MAP1LC3B/LC3-II and for Parkin-mediated mitophagy.</text>
</comment>
<comment type="PTM">
    <text evidence="2">Phosphorylated. Tyrosine phosphorylation is indirectly stimulated by IGFBP6.</text>
</comment>
<comment type="similarity">
    <text evidence="3">Belongs to the prohibitin family.</text>
</comment>
<keyword id="KW-0007">Acetylation</keyword>
<keyword id="KW-1003">Cell membrane</keyword>
<keyword id="KW-0175">Coiled coil</keyword>
<keyword id="KW-0963">Cytoplasm</keyword>
<keyword id="KW-0903">Direct protein sequencing</keyword>
<keyword id="KW-0472">Membrane</keyword>
<keyword id="KW-0496">Mitochondrion</keyword>
<keyword id="KW-0999">Mitochondrion inner membrane</keyword>
<keyword id="KW-0539">Nucleus</keyword>
<keyword id="KW-0597">Phosphoprotein</keyword>
<keyword id="KW-0675">Receptor</keyword>
<keyword id="KW-1185">Reference proteome</keyword>
<keyword id="KW-0678">Repressor</keyword>
<keyword id="KW-0804">Transcription</keyword>
<keyword id="KW-0805">Transcription regulation</keyword>
<feature type="initiator methionine" description="Removed" evidence="2">
    <location>
        <position position="1"/>
    </location>
</feature>
<feature type="chain" id="PRO_0000213886" description="Prohibitin-2">
    <location>
        <begin position="2"/>
        <end position="299"/>
    </location>
</feature>
<feature type="region of interest" description="Necessary for transcriptional repression" evidence="2">
    <location>
        <begin position="19"/>
        <end position="49"/>
    </location>
</feature>
<feature type="region of interest" description="Necessary for transcriptional repression" evidence="2">
    <location>
        <begin position="150"/>
        <end position="174"/>
    </location>
</feature>
<feature type="coiled-coil region" evidence="3">
    <location>
        <begin position="190"/>
        <end position="238"/>
    </location>
</feature>
<feature type="modified residue" description="N-acetylalanine" evidence="2">
    <location>
        <position position="2"/>
    </location>
</feature>
<feature type="modified residue" description="Phosphotyrosine" evidence="2">
    <location>
        <position position="128"/>
    </location>
</feature>
<feature type="modified residue" description="N6-acetyllysine" evidence="1">
    <location>
        <position position="147"/>
    </location>
</feature>
<feature type="modified residue" description="Phosphoserine" evidence="9">
    <location>
        <position position="151"/>
    </location>
</feature>
<feature type="modified residue" description="N6-acetyllysine" evidence="1">
    <location>
        <position position="200"/>
    </location>
</feature>
<feature type="modified residue" description="N6-acetyllysine" evidence="1">
    <location>
        <position position="236"/>
    </location>
</feature>
<feature type="modified residue" description="N6-acetyllysine" evidence="2">
    <location>
        <position position="250"/>
    </location>
</feature>
<feature type="modified residue" description="N6-acetyllysine" evidence="1">
    <location>
        <position position="262"/>
    </location>
</feature>
<feature type="sequence conflict" description="In Ref. 2; AAB18746." evidence="5" ref="2">
    <original>P</original>
    <variation>T</variation>
    <location>
        <position position="87"/>
    </location>
</feature>
<feature type="sequence conflict" description="In Ref. 2." evidence="5" ref="2">
    <original>V</original>
    <variation>F</variation>
    <location>
        <position position="108"/>
    </location>
</feature>
<feature type="sequence conflict" description="In Ref. 2; AAB18747." evidence="5" ref="2">
    <original>FT</original>
    <variation>LI</variation>
    <location>
        <begin position="287"/>
        <end position="288"/>
    </location>
</feature>
<feature type="sequence conflict" description="In Ref. 2; AAB18747." evidence="5" ref="2">
    <original>L</original>
    <variation>F</variation>
    <location>
        <position position="294"/>
    </location>
</feature>
<sequence>MAQNLKDLAGRLPSGPRGMGTALKLLLGAGAVAYGVRESVFTVEGGHRAIFFNRIGGVQQDTILAEGLHFRIPWFQYPIIYDIRARPRKISSPTGSKDLQMVNISLRVLSRPNAQELPSMYQRLGLDYEERVLPSIVNEVLKSVVAKFNASQLITQRAQVSLLIRRELTERAKDFSLILDDVAITELSFSREYTAAVEAKQVAQQEAQRAQFLVEKAKQEQRQKIVQAEGEAEAAKMLGEALSKNPGYIKLRKIRAAQNISKTIATSQNRIYLTADNLVLNLQDESFTRGSDSLIKGKK</sequence>